<accession>P52733</accession>
<organism>
    <name type="scientific">Pinus thunbergii</name>
    <name type="common">Japanese black pine</name>
    <name type="synonym">Pinus thunbergiana</name>
    <dbReference type="NCBI Taxonomy" id="3350"/>
    <lineage>
        <taxon>Eukaryota</taxon>
        <taxon>Viridiplantae</taxon>
        <taxon>Streptophyta</taxon>
        <taxon>Embryophyta</taxon>
        <taxon>Tracheophyta</taxon>
        <taxon>Spermatophyta</taxon>
        <taxon>Pinopsida</taxon>
        <taxon>Pinidae</taxon>
        <taxon>Conifers I</taxon>
        <taxon>Pinales</taxon>
        <taxon>Pinaceae</taxon>
        <taxon>Pinus</taxon>
        <taxon>Pinus subgen. Pinus</taxon>
    </lineage>
</organism>
<proteinExistence type="inferred from homology"/>
<evidence type="ECO:0000255" key="1">
    <source>
        <dbReference type="HAMAP-Rule" id="MF_01323"/>
    </source>
</evidence>
<reference key="1">
    <citation type="journal article" date="1994" name="Proc. Natl. Acad. Sci. U.S.A.">
        <title>Loss of all ndh genes as determined by sequencing the entire chloroplast genome of the black pine Pinus thunbergii.</title>
        <authorList>
            <person name="Wakasugi T."/>
            <person name="Tsudzuki J."/>
            <person name="Ito S."/>
            <person name="Nakashima K."/>
            <person name="Tsudzuki T."/>
            <person name="Sugiura M."/>
        </authorList>
    </citation>
    <scope>NUCLEOTIDE SEQUENCE [LARGE SCALE GENOMIC DNA]</scope>
</reference>
<sequence>MIDQNKHQQLRIGLASPEQICAWSEKILPNGEIVGQVTKPHTLHYETNKPERDGSFCERIFGPIKSGVCSCGNSPGIGNEKIDAKFCTQCGVEFVDSRIRRYQMGYIKLACPVVHVWYLKRLPSYIANLLAKTRKELEGPVYCDLFLARPIANKPTLLRSRGTFDYEIQSWREIIPHYLSARPYYLFPRGSGTFKEREIATGGDAIGKQLMGLDLQMIIDRSHMEWKNLVELKWNRLEENQESTVDRWEDEKIRRRKDFLVGRMKLAKHFLRTNIEPKWMVLCLLPVLPPEPRPIVQLGEGGLITSSDLNELYRRVINRNNTLTNLLARSGSESFVIYQTKLIQEAVDALLDNGICRQPMRDSHNRPYKSFSDVIEGKEGRFRENLLGKRVDYSGRSVIVVGPFLSLYQCGLPSEIAIELFQAFLIRSLIGRHIAPNLRTAKSMIRDKGPIVWEVLQEVMQGHPILLNRAPTLHKLGIQAFQPILVEGRAIRLHPSVCGGFNADFDGDQMAVHVPLSLEARAEARLLMFSETNLLSPAIGDPISIPTQDMLLGLYISTVQNSQGIYGNRYHPYHSENKSFSCKKPSFYSYDDVLRAYRQKRIDLYSPLWLRWGEVDLRIITSVNQEAPIEVQYESLGTFHEIHEHYRIRKGRMGEILNIYIRTTVGRTRFNREMEEAIQGFACSEHPNKSLPALRI</sequence>
<dbReference type="EC" id="2.7.7.6" evidence="1"/>
<dbReference type="EMBL" id="D17510">
    <property type="protein sequence ID" value="BAA23472.1"/>
    <property type="molecule type" value="Genomic_DNA"/>
</dbReference>
<dbReference type="PIR" id="T07447">
    <property type="entry name" value="T07447"/>
</dbReference>
<dbReference type="RefSeq" id="NP_042368.1">
    <property type="nucleotide sequence ID" value="NC_001631.1"/>
</dbReference>
<dbReference type="SMR" id="P52733"/>
<dbReference type="GeneID" id="809013"/>
<dbReference type="GO" id="GO:0009507">
    <property type="term" value="C:chloroplast"/>
    <property type="evidence" value="ECO:0007669"/>
    <property type="project" value="UniProtKB-SubCell"/>
</dbReference>
<dbReference type="GO" id="GO:0000428">
    <property type="term" value="C:DNA-directed RNA polymerase complex"/>
    <property type="evidence" value="ECO:0007669"/>
    <property type="project" value="UniProtKB-KW"/>
</dbReference>
<dbReference type="GO" id="GO:0005739">
    <property type="term" value="C:mitochondrion"/>
    <property type="evidence" value="ECO:0007669"/>
    <property type="project" value="GOC"/>
</dbReference>
<dbReference type="GO" id="GO:0003677">
    <property type="term" value="F:DNA binding"/>
    <property type="evidence" value="ECO:0007669"/>
    <property type="project" value="UniProtKB-UniRule"/>
</dbReference>
<dbReference type="GO" id="GO:0003899">
    <property type="term" value="F:DNA-directed RNA polymerase activity"/>
    <property type="evidence" value="ECO:0007669"/>
    <property type="project" value="UniProtKB-UniRule"/>
</dbReference>
<dbReference type="GO" id="GO:0000287">
    <property type="term" value="F:magnesium ion binding"/>
    <property type="evidence" value="ECO:0007669"/>
    <property type="project" value="UniProtKB-UniRule"/>
</dbReference>
<dbReference type="GO" id="GO:0008270">
    <property type="term" value="F:zinc ion binding"/>
    <property type="evidence" value="ECO:0007669"/>
    <property type="project" value="UniProtKB-UniRule"/>
</dbReference>
<dbReference type="GO" id="GO:0006351">
    <property type="term" value="P:DNA-templated transcription"/>
    <property type="evidence" value="ECO:0007669"/>
    <property type="project" value="UniProtKB-UniRule"/>
</dbReference>
<dbReference type="Gene3D" id="1.10.40.90">
    <property type="match status" value="1"/>
</dbReference>
<dbReference type="Gene3D" id="2.40.40.20">
    <property type="match status" value="1"/>
</dbReference>
<dbReference type="Gene3D" id="4.10.860.120">
    <property type="entry name" value="RNA polymerase II, clamp domain"/>
    <property type="match status" value="1"/>
</dbReference>
<dbReference type="Gene3D" id="1.10.274.100">
    <property type="entry name" value="RNA polymerase Rpb1, domain 3"/>
    <property type="match status" value="1"/>
</dbReference>
<dbReference type="HAMAP" id="MF_01323">
    <property type="entry name" value="RNApol_bact_RpoC1"/>
    <property type="match status" value="1"/>
</dbReference>
<dbReference type="InterPro" id="IPR045867">
    <property type="entry name" value="DNA-dir_RpoC_beta_prime"/>
</dbReference>
<dbReference type="InterPro" id="IPR000722">
    <property type="entry name" value="RNA_pol_asu"/>
</dbReference>
<dbReference type="InterPro" id="IPR006592">
    <property type="entry name" value="RNA_pol_N"/>
</dbReference>
<dbReference type="InterPro" id="IPR007080">
    <property type="entry name" value="RNA_pol_Rpb1_1"/>
</dbReference>
<dbReference type="InterPro" id="IPR042102">
    <property type="entry name" value="RNA_pol_Rpb1_3_sf"/>
</dbReference>
<dbReference type="InterPro" id="IPR044893">
    <property type="entry name" value="RNA_pol_Rpb1_clamp_domain"/>
</dbReference>
<dbReference type="InterPro" id="IPR034678">
    <property type="entry name" value="RNApol_RpoC1"/>
</dbReference>
<dbReference type="PANTHER" id="PTHR19376">
    <property type="entry name" value="DNA-DIRECTED RNA POLYMERASE"/>
    <property type="match status" value="1"/>
</dbReference>
<dbReference type="PANTHER" id="PTHR19376:SF54">
    <property type="entry name" value="DNA-DIRECTED RNA POLYMERASE SUBUNIT BETA"/>
    <property type="match status" value="1"/>
</dbReference>
<dbReference type="Pfam" id="PF04997">
    <property type="entry name" value="RNA_pol_Rpb1_1"/>
    <property type="match status" value="2"/>
</dbReference>
<dbReference type="Pfam" id="PF00623">
    <property type="entry name" value="RNA_pol_Rpb1_2"/>
    <property type="match status" value="2"/>
</dbReference>
<dbReference type="SMART" id="SM00663">
    <property type="entry name" value="RPOLA_N"/>
    <property type="match status" value="1"/>
</dbReference>
<dbReference type="SUPFAM" id="SSF64484">
    <property type="entry name" value="beta and beta-prime subunits of DNA dependent RNA-polymerase"/>
    <property type="match status" value="1"/>
</dbReference>
<geneLocation type="chloroplast"/>
<comment type="function">
    <text evidence="1">DNA-dependent RNA polymerase catalyzes the transcription of DNA into RNA using the four ribonucleoside triphosphates as substrates.</text>
</comment>
<comment type="catalytic activity">
    <reaction evidence="1">
        <text>RNA(n) + a ribonucleoside 5'-triphosphate = RNA(n+1) + diphosphate</text>
        <dbReference type="Rhea" id="RHEA:21248"/>
        <dbReference type="Rhea" id="RHEA-COMP:14527"/>
        <dbReference type="Rhea" id="RHEA-COMP:17342"/>
        <dbReference type="ChEBI" id="CHEBI:33019"/>
        <dbReference type="ChEBI" id="CHEBI:61557"/>
        <dbReference type="ChEBI" id="CHEBI:140395"/>
        <dbReference type="EC" id="2.7.7.6"/>
    </reaction>
</comment>
<comment type="cofactor">
    <cofactor evidence="1">
        <name>Mg(2+)</name>
        <dbReference type="ChEBI" id="CHEBI:18420"/>
    </cofactor>
    <text evidence="1">Binds 1 Mg(2+) ion per subunit.</text>
</comment>
<comment type="cofactor">
    <cofactor evidence="1">
        <name>Zn(2+)</name>
        <dbReference type="ChEBI" id="CHEBI:29105"/>
    </cofactor>
    <text evidence="1">Binds 1 Zn(2+) ion per subunit.</text>
</comment>
<comment type="subunit">
    <text evidence="1">In plastids the minimal PEP RNA polymerase catalytic core is composed of four subunits: alpha, beta, beta', and beta''. When a (nuclear-encoded) sigma factor is associated with the core the holoenzyme is formed, which can initiate transcription.</text>
</comment>
<comment type="subcellular location">
    <subcellularLocation>
        <location evidence="1">Plastid</location>
        <location evidence="1">Chloroplast</location>
    </subcellularLocation>
</comment>
<comment type="similarity">
    <text evidence="1">Belongs to the RNA polymerase beta' chain family. RpoC1 subfamily.</text>
</comment>
<name>RPOC1_PINTH</name>
<gene>
    <name evidence="1" type="primary">rpoC1</name>
</gene>
<feature type="chain" id="PRO_0000067891" description="DNA-directed RNA polymerase subunit beta'">
    <location>
        <begin position="1"/>
        <end position="696"/>
    </location>
</feature>
<feature type="binding site" evidence="1">
    <location>
        <position position="69"/>
    </location>
    <ligand>
        <name>Zn(2+)</name>
        <dbReference type="ChEBI" id="CHEBI:29105"/>
    </ligand>
</feature>
<feature type="binding site" evidence="1">
    <location>
        <position position="71"/>
    </location>
    <ligand>
        <name>Zn(2+)</name>
        <dbReference type="ChEBI" id="CHEBI:29105"/>
    </ligand>
</feature>
<feature type="binding site" evidence="1">
    <location>
        <position position="87"/>
    </location>
    <ligand>
        <name>Zn(2+)</name>
        <dbReference type="ChEBI" id="CHEBI:29105"/>
    </ligand>
</feature>
<feature type="binding site" evidence="1">
    <location>
        <position position="90"/>
    </location>
    <ligand>
        <name>Zn(2+)</name>
        <dbReference type="ChEBI" id="CHEBI:29105"/>
    </ligand>
</feature>
<feature type="binding site" evidence="1">
    <location>
        <position position="504"/>
    </location>
    <ligand>
        <name>Mg(2+)</name>
        <dbReference type="ChEBI" id="CHEBI:18420"/>
    </ligand>
</feature>
<feature type="binding site" evidence="1">
    <location>
        <position position="506"/>
    </location>
    <ligand>
        <name>Mg(2+)</name>
        <dbReference type="ChEBI" id="CHEBI:18420"/>
    </ligand>
</feature>
<feature type="binding site" evidence="1">
    <location>
        <position position="508"/>
    </location>
    <ligand>
        <name>Mg(2+)</name>
        <dbReference type="ChEBI" id="CHEBI:18420"/>
    </ligand>
</feature>
<keyword id="KW-0150">Chloroplast</keyword>
<keyword id="KW-0240">DNA-directed RNA polymerase</keyword>
<keyword id="KW-0460">Magnesium</keyword>
<keyword id="KW-0479">Metal-binding</keyword>
<keyword id="KW-0548">Nucleotidyltransferase</keyword>
<keyword id="KW-0934">Plastid</keyword>
<keyword id="KW-0804">Transcription</keyword>
<keyword id="KW-0808">Transferase</keyword>
<keyword id="KW-0862">Zinc</keyword>
<protein>
    <recommendedName>
        <fullName evidence="1">DNA-directed RNA polymerase subunit beta'</fullName>
        <ecNumber evidence="1">2.7.7.6</ecNumber>
    </recommendedName>
    <alternativeName>
        <fullName evidence="1">PEP</fullName>
    </alternativeName>
    <alternativeName>
        <fullName evidence="1">Plastid-encoded RNA polymerase subunit beta'</fullName>
        <shortName evidence="1">RNA polymerase subunit beta'</shortName>
    </alternativeName>
</protein>